<accession>Q6AT33</accession>
<accession>Q0DG09</accession>
<keyword id="KW-0927">Auxin signaling pathway</keyword>
<keyword id="KW-0539">Nucleus</keyword>
<keyword id="KW-1185">Reference proteome</keyword>
<keyword id="KW-0678">Repressor</keyword>
<keyword id="KW-0804">Transcription</keyword>
<keyword id="KW-0805">Transcription regulation</keyword>
<sequence length="281" mass="29934">MPPPLEARDYIGLAASPASSSSSCCASTPVAEVVGAHLALRLGLPGSESPARAEAEAVVVDAALTLGPAPPPRGGAKRGFVDSLDRSEGRRAAATAGDDERGVREEEEEEKGLGEAAAGAPRAAKAQVVGWPPVRSYRKNTLAASATKTKGEDQGKSEVGCCYVKVSMDGAPYLRKVDLKTYSSYEDLSLALEKMFSCFITGRSSSHKTSKRDRLTDGSRADALKDQEYVLTYEDKDADWMLVGDLPWDLFTTSCRKLRIMRGSDAAGMAPRSLEQTGQNK</sequence>
<name>IAA19_ORYSJ</name>
<proteinExistence type="evidence at transcript level"/>
<dbReference type="EMBL" id="AC144735">
    <property type="protein sequence ID" value="AAT85102.1"/>
    <property type="molecule type" value="Genomic_DNA"/>
</dbReference>
<dbReference type="EMBL" id="AP008211">
    <property type="protein sequence ID" value="BAF18214.1"/>
    <property type="molecule type" value="Genomic_DNA"/>
</dbReference>
<dbReference type="EMBL" id="AP014961">
    <property type="protein sequence ID" value="BAS95304.1"/>
    <property type="molecule type" value="Genomic_DNA"/>
</dbReference>
<dbReference type="EMBL" id="CM000142">
    <property type="protein sequence ID" value="EEE64666.1"/>
    <property type="molecule type" value="Genomic_DNA"/>
</dbReference>
<dbReference type="EMBL" id="AK061439">
    <property type="protein sequence ID" value="BAG87928.1"/>
    <property type="molecule type" value="mRNA"/>
</dbReference>
<dbReference type="EMBL" id="AK099253">
    <property type="protein sequence ID" value="BAG94023.1"/>
    <property type="molecule type" value="mRNA"/>
</dbReference>
<dbReference type="EMBL" id="AK104018">
    <property type="protein sequence ID" value="BAG96375.1"/>
    <property type="molecule type" value="mRNA"/>
</dbReference>
<dbReference type="EMBL" id="AK106181">
    <property type="protein sequence ID" value="BAG97621.1"/>
    <property type="molecule type" value="mRNA"/>
</dbReference>
<dbReference type="RefSeq" id="XP_015640557.1">
    <property type="nucleotide sequence ID" value="XM_015785071.1"/>
</dbReference>
<dbReference type="SMR" id="Q6AT33"/>
<dbReference type="FunCoup" id="Q6AT33">
    <property type="interactions" value="272"/>
</dbReference>
<dbReference type="STRING" id="39947.Q6AT33"/>
<dbReference type="PaxDb" id="39947-Q6AT33"/>
<dbReference type="EnsemblPlants" id="Os05t0559400-01">
    <property type="protein sequence ID" value="Os05t0559400-01"/>
    <property type="gene ID" value="Os05g0559400"/>
</dbReference>
<dbReference type="EnsemblPlants" id="Os05t0559400-02">
    <property type="protein sequence ID" value="Os05t0559400-02"/>
    <property type="gene ID" value="Os05g0559400"/>
</dbReference>
<dbReference type="EnsemblPlants" id="Os05t0559400-03">
    <property type="protein sequence ID" value="Os05t0559400-03"/>
    <property type="gene ID" value="Os05g0559400"/>
</dbReference>
<dbReference type="Gramene" id="Os05t0559400-01">
    <property type="protein sequence ID" value="Os05t0559400-01"/>
    <property type="gene ID" value="Os05g0559400"/>
</dbReference>
<dbReference type="Gramene" id="Os05t0559400-02">
    <property type="protein sequence ID" value="Os05t0559400-02"/>
    <property type="gene ID" value="Os05g0559400"/>
</dbReference>
<dbReference type="Gramene" id="Os05t0559400-03">
    <property type="protein sequence ID" value="Os05t0559400-03"/>
    <property type="gene ID" value="Os05g0559400"/>
</dbReference>
<dbReference type="KEGG" id="dosa:Os05g0559400"/>
<dbReference type="eggNOG" id="ENOG502SMVB">
    <property type="taxonomic scope" value="Eukaryota"/>
</dbReference>
<dbReference type="HOGENOM" id="CLU_049393_1_0_1"/>
<dbReference type="InParanoid" id="Q6AT33"/>
<dbReference type="OMA" id="GKSEVGC"/>
<dbReference type="OrthoDB" id="7848332at2759"/>
<dbReference type="PlantReactome" id="R-OSA-5608118">
    <property type="pathway name" value="Auxin signalling"/>
</dbReference>
<dbReference type="Proteomes" id="UP000000763">
    <property type="component" value="Chromosome 5"/>
</dbReference>
<dbReference type="Proteomes" id="UP000007752">
    <property type="component" value="Chromosome 5"/>
</dbReference>
<dbReference type="Proteomes" id="UP000059680">
    <property type="component" value="Chromosome 5"/>
</dbReference>
<dbReference type="GO" id="GO:0005634">
    <property type="term" value="C:nucleus"/>
    <property type="evidence" value="ECO:0007669"/>
    <property type="project" value="UniProtKB-SubCell"/>
</dbReference>
<dbReference type="GO" id="GO:0009734">
    <property type="term" value="P:auxin-activated signaling pathway"/>
    <property type="evidence" value="ECO:0007669"/>
    <property type="project" value="UniProtKB-KW"/>
</dbReference>
<dbReference type="GO" id="GO:0006355">
    <property type="term" value="P:regulation of DNA-templated transcription"/>
    <property type="evidence" value="ECO:0007669"/>
    <property type="project" value="InterPro"/>
</dbReference>
<dbReference type="GO" id="GO:0009733">
    <property type="term" value="P:response to auxin"/>
    <property type="evidence" value="ECO:0000305"/>
    <property type="project" value="Gramene"/>
</dbReference>
<dbReference type="FunFam" id="3.10.20.90:FF:000078">
    <property type="entry name" value="Auxin-responsive protein"/>
    <property type="match status" value="1"/>
</dbReference>
<dbReference type="Gene3D" id="3.10.20.90">
    <property type="entry name" value="Phosphatidylinositol 3-kinase Catalytic Subunit, Chain A, domain 1"/>
    <property type="match status" value="1"/>
</dbReference>
<dbReference type="InterPro" id="IPR033389">
    <property type="entry name" value="AUX/IAA_dom"/>
</dbReference>
<dbReference type="InterPro" id="IPR003311">
    <property type="entry name" value="AUX_IAA"/>
</dbReference>
<dbReference type="InterPro" id="IPR053793">
    <property type="entry name" value="PB1-like"/>
</dbReference>
<dbReference type="PANTHER" id="PTHR31734">
    <property type="entry name" value="AUXIN-RESPONSIVE PROTEIN IAA17"/>
    <property type="match status" value="1"/>
</dbReference>
<dbReference type="PANTHER" id="PTHR31734:SF173">
    <property type="entry name" value="AUXIN-RESPONSIVE PROTEIN IAA19"/>
    <property type="match status" value="1"/>
</dbReference>
<dbReference type="Pfam" id="PF02309">
    <property type="entry name" value="AUX_IAA"/>
    <property type="match status" value="1"/>
</dbReference>
<dbReference type="SUPFAM" id="SSF54277">
    <property type="entry name" value="CAD &amp; PB1 domains"/>
    <property type="match status" value="1"/>
</dbReference>
<dbReference type="PROSITE" id="PS51745">
    <property type="entry name" value="PB1"/>
    <property type="match status" value="1"/>
</dbReference>
<protein>
    <recommendedName>
        <fullName>Auxin-responsive protein IAA19</fullName>
    </recommendedName>
    <alternativeName>
        <fullName>Indoleacetic acid-induced protein 19</fullName>
    </alternativeName>
</protein>
<reference key="1">
    <citation type="journal article" date="2005" name="Mol. Genet. Genomics">
        <title>A fine physical map of the rice chromosome 5.</title>
        <authorList>
            <person name="Cheng C.-H."/>
            <person name="Chung M.C."/>
            <person name="Liu S.-M."/>
            <person name="Chen S.-K."/>
            <person name="Kao F.Y."/>
            <person name="Lin S.-J."/>
            <person name="Hsiao S.-H."/>
            <person name="Tseng I.C."/>
            <person name="Hsing Y.-I.C."/>
            <person name="Wu H.-P."/>
            <person name="Chen C.-S."/>
            <person name="Shaw J.-F."/>
            <person name="Wu J."/>
            <person name="Matsumoto T."/>
            <person name="Sasaki T."/>
            <person name="Chen H.-C."/>
            <person name="Chow T.-Y."/>
        </authorList>
    </citation>
    <scope>NUCLEOTIDE SEQUENCE [LARGE SCALE GENOMIC DNA]</scope>
    <source>
        <strain>cv. Nipponbare</strain>
    </source>
</reference>
<reference key="2">
    <citation type="journal article" date="2005" name="Nature">
        <title>The map-based sequence of the rice genome.</title>
        <authorList>
            <consortium name="International rice genome sequencing project (IRGSP)"/>
        </authorList>
    </citation>
    <scope>NUCLEOTIDE SEQUENCE [LARGE SCALE GENOMIC DNA]</scope>
    <source>
        <strain>cv. Nipponbare</strain>
    </source>
</reference>
<reference key="3">
    <citation type="journal article" date="2008" name="Nucleic Acids Res.">
        <title>The rice annotation project database (RAP-DB): 2008 update.</title>
        <authorList>
            <consortium name="The rice annotation project (RAP)"/>
        </authorList>
    </citation>
    <scope>GENOME REANNOTATION</scope>
    <source>
        <strain>cv. Nipponbare</strain>
    </source>
</reference>
<reference key="4">
    <citation type="journal article" date="2013" name="Rice">
        <title>Improvement of the Oryza sativa Nipponbare reference genome using next generation sequence and optical map data.</title>
        <authorList>
            <person name="Kawahara Y."/>
            <person name="de la Bastide M."/>
            <person name="Hamilton J.P."/>
            <person name="Kanamori H."/>
            <person name="McCombie W.R."/>
            <person name="Ouyang S."/>
            <person name="Schwartz D.C."/>
            <person name="Tanaka T."/>
            <person name="Wu J."/>
            <person name="Zhou S."/>
            <person name="Childs K.L."/>
            <person name="Davidson R.M."/>
            <person name="Lin H."/>
            <person name="Quesada-Ocampo L."/>
            <person name="Vaillancourt B."/>
            <person name="Sakai H."/>
            <person name="Lee S.S."/>
            <person name="Kim J."/>
            <person name="Numa H."/>
            <person name="Itoh T."/>
            <person name="Buell C.R."/>
            <person name="Matsumoto T."/>
        </authorList>
    </citation>
    <scope>GENOME REANNOTATION</scope>
    <source>
        <strain>cv. Nipponbare</strain>
    </source>
</reference>
<reference key="5">
    <citation type="journal article" date="2005" name="PLoS Biol.">
        <title>The genomes of Oryza sativa: a history of duplications.</title>
        <authorList>
            <person name="Yu J."/>
            <person name="Wang J."/>
            <person name="Lin W."/>
            <person name="Li S."/>
            <person name="Li H."/>
            <person name="Zhou J."/>
            <person name="Ni P."/>
            <person name="Dong W."/>
            <person name="Hu S."/>
            <person name="Zeng C."/>
            <person name="Zhang J."/>
            <person name="Zhang Y."/>
            <person name="Li R."/>
            <person name="Xu Z."/>
            <person name="Li S."/>
            <person name="Li X."/>
            <person name="Zheng H."/>
            <person name="Cong L."/>
            <person name="Lin L."/>
            <person name="Yin J."/>
            <person name="Geng J."/>
            <person name="Li G."/>
            <person name="Shi J."/>
            <person name="Liu J."/>
            <person name="Lv H."/>
            <person name="Li J."/>
            <person name="Wang J."/>
            <person name="Deng Y."/>
            <person name="Ran L."/>
            <person name="Shi X."/>
            <person name="Wang X."/>
            <person name="Wu Q."/>
            <person name="Li C."/>
            <person name="Ren X."/>
            <person name="Wang J."/>
            <person name="Wang X."/>
            <person name="Li D."/>
            <person name="Liu D."/>
            <person name="Zhang X."/>
            <person name="Ji Z."/>
            <person name="Zhao W."/>
            <person name="Sun Y."/>
            <person name="Zhang Z."/>
            <person name="Bao J."/>
            <person name="Han Y."/>
            <person name="Dong L."/>
            <person name="Ji J."/>
            <person name="Chen P."/>
            <person name="Wu S."/>
            <person name="Liu J."/>
            <person name="Xiao Y."/>
            <person name="Bu D."/>
            <person name="Tan J."/>
            <person name="Yang L."/>
            <person name="Ye C."/>
            <person name="Zhang J."/>
            <person name="Xu J."/>
            <person name="Zhou Y."/>
            <person name="Yu Y."/>
            <person name="Zhang B."/>
            <person name="Zhuang S."/>
            <person name="Wei H."/>
            <person name="Liu B."/>
            <person name="Lei M."/>
            <person name="Yu H."/>
            <person name="Li Y."/>
            <person name="Xu H."/>
            <person name="Wei S."/>
            <person name="He X."/>
            <person name="Fang L."/>
            <person name="Zhang Z."/>
            <person name="Zhang Y."/>
            <person name="Huang X."/>
            <person name="Su Z."/>
            <person name="Tong W."/>
            <person name="Li J."/>
            <person name="Tong Z."/>
            <person name="Li S."/>
            <person name="Ye J."/>
            <person name="Wang L."/>
            <person name="Fang L."/>
            <person name="Lei T."/>
            <person name="Chen C.-S."/>
            <person name="Chen H.-C."/>
            <person name="Xu Z."/>
            <person name="Li H."/>
            <person name="Huang H."/>
            <person name="Zhang F."/>
            <person name="Xu H."/>
            <person name="Li N."/>
            <person name="Zhao C."/>
            <person name="Li S."/>
            <person name="Dong L."/>
            <person name="Huang Y."/>
            <person name="Li L."/>
            <person name="Xi Y."/>
            <person name="Qi Q."/>
            <person name="Li W."/>
            <person name="Zhang B."/>
            <person name="Hu W."/>
            <person name="Zhang Y."/>
            <person name="Tian X."/>
            <person name="Jiao Y."/>
            <person name="Liang X."/>
            <person name="Jin J."/>
            <person name="Gao L."/>
            <person name="Zheng W."/>
            <person name="Hao B."/>
            <person name="Liu S.-M."/>
            <person name="Wang W."/>
            <person name="Yuan L."/>
            <person name="Cao M."/>
            <person name="McDermott J."/>
            <person name="Samudrala R."/>
            <person name="Wang J."/>
            <person name="Wong G.K.-S."/>
            <person name="Yang H."/>
        </authorList>
    </citation>
    <scope>NUCLEOTIDE SEQUENCE [LARGE SCALE GENOMIC DNA]</scope>
    <source>
        <strain>cv. Nipponbare</strain>
    </source>
</reference>
<reference key="6">
    <citation type="journal article" date="2003" name="Science">
        <title>Collection, mapping, and annotation of over 28,000 cDNA clones from japonica rice.</title>
        <authorList>
            <consortium name="The rice full-length cDNA consortium"/>
        </authorList>
    </citation>
    <scope>NUCLEOTIDE SEQUENCE [LARGE SCALE MRNA]</scope>
    <source>
        <strain>cv. Nipponbare</strain>
    </source>
</reference>
<reference key="7">
    <citation type="journal article" date="2006" name="Funct. Integr. Genomics">
        <title>Structure and expression analysis of early auxin-responsive Aux/IAA gene family in rice (Oryza sativa).</title>
        <authorList>
            <person name="Jain M."/>
            <person name="Kaur N."/>
            <person name="Garg R."/>
            <person name="Thakur J.K."/>
            <person name="Tyagi A.K."/>
            <person name="Khurana J.P."/>
        </authorList>
    </citation>
    <scope>TISSUE SPECIFICITY</scope>
    <scope>INDUCTION</scope>
    <scope>NOMENCLATURE</scope>
</reference>
<organism>
    <name type="scientific">Oryza sativa subsp. japonica</name>
    <name type="common">Rice</name>
    <dbReference type="NCBI Taxonomy" id="39947"/>
    <lineage>
        <taxon>Eukaryota</taxon>
        <taxon>Viridiplantae</taxon>
        <taxon>Streptophyta</taxon>
        <taxon>Embryophyta</taxon>
        <taxon>Tracheophyta</taxon>
        <taxon>Spermatophyta</taxon>
        <taxon>Magnoliopsida</taxon>
        <taxon>Liliopsida</taxon>
        <taxon>Poales</taxon>
        <taxon>Poaceae</taxon>
        <taxon>BOP clade</taxon>
        <taxon>Oryzoideae</taxon>
        <taxon>Oryzeae</taxon>
        <taxon>Oryzinae</taxon>
        <taxon>Oryza</taxon>
        <taxon>Oryza sativa</taxon>
    </lineage>
</organism>
<feature type="chain" id="PRO_0000223218" description="Auxin-responsive protein IAA19">
    <location>
        <begin position="1"/>
        <end position="281"/>
    </location>
</feature>
<feature type="domain" description="PB1" evidence="2">
    <location>
        <begin position="161"/>
        <end position="265"/>
    </location>
</feature>
<feature type="region of interest" description="Disordered" evidence="3">
    <location>
        <begin position="66"/>
        <end position="126"/>
    </location>
</feature>
<feature type="short sequence motif" description="EAR-like (transcriptional repression)" evidence="1">
    <location>
        <begin position="40"/>
        <end position="44"/>
    </location>
</feature>
<feature type="compositionally biased region" description="Basic and acidic residues" evidence="3">
    <location>
        <begin position="79"/>
        <end position="91"/>
    </location>
</feature>
<feature type="compositionally biased region" description="Low complexity" evidence="3">
    <location>
        <begin position="114"/>
        <end position="126"/>
    </location>
</feature>
<evidence type="ECO:0000250" key="1"/>
<evidence type="ECO:0000255" key="2">
    <source>
        <dbReference type="PROSITE-ProRule" id="PRU01081"/>
    </source>
</evidence>
<evidence type="ECO:0000256" key="3">
    <source>
        <dbReference type="SAM" id="MobiDB-lite"/>
    </source>
</evidence>
<evidence type="ECO:0000269" key="4">
    <source>
    </source>
</evidence>
<evidence type="ECO:0000305" key="5"/>
<evidence type="ECO:0000312" key="6">
    <source>
        <dbReference type="EMBL" id="EEE64666.1"/>
    </source>
</evidence>
<gene>
    <name type="primary">IAA19</name>
    <name type="ordered locus">Os05g0559400</name>
    <name type="ordered locus">LOC_Os05g48590</name>
    <name evidence="6" type="ORF">OsJ_19520</name>
    <name type="ORF">OSJNBa0001A14.14</name>
</gene>
<comment type="function">
    <text evidence="1">Aux/IAA proteins are short-lived transcriptional factors that function as repressors of early auxin response genes at low auxin concentrations.</text>
</comment>
<comment type="subunit">
    <text evidence="1">Homodimers and heterodimers.</text>
</comment>
<comment type="subcellular location">
    <subcellularLocation>
        <location evidence="1">Nucleus</location>
    </subcellularLocation>
</comment>
<comment type="tissue specificity">
    <text evidence="4">Expressed in etiolated seedlings and flowers.</text>
</comment>
<comment type="induction">
    <text evidence="4">By auxin.</text>
</comment>
<comment type="similarity">
    <text evidence="5">Belongs to the Aux/IAA family.</text>
</comment>